<feature type="chain" id="PRO_1000045162" description="UPF0270 protein ECA4061">
    <location>
        <begin position="1"/>
        <end position="78"/>
    </location>
</feature>
<comment type="similarity">
    <text evidence="1">Belongs to the UPF0270 family.</text>
</comment>
<protein>
    <recommendedName>
        <fullName evidence="1">UPF0270 protein ECA4061</fullName>
    </recommendedName>
</protein>
<organism>
    <name type="scientific">Pectobacterium atrosepticum (strain SCRI 1043 / ATCC BAA-672)</name>
    <name type="common">Erwinia carotovora subsp. atroseptica</name>
    <dbReference type="NCBI Taxonomy" id="218491"/>
    <lineage>
        <taxon>Bacteria</taxon>
        <taxon>Pseudomonadati</taxon>
        <taxon>Pseudomonadota</taxon>
        <taxon>Gammaproteobacteria</taxon>
        <taxon>Enterobacterales</taxon>
        <taxon>Pectobacteriaceae</taxon>
        <taxon>Pectobacterium</taxon>
    </lineage>
</organism>
<dbReference type="EMBL" id="BX950851">
    <property type="protein sequence ID" value="CAG76958.1"/>
    <property type="molecule type" value="Genomic_DNA"/>
</dbReference>
<dbReference type="RefSeq" id="WP_011095536.1">
    <property type="nucleotide sequence ID" value="NC_004547.2"/>
</dbReference>
<dbReference type="SMR" id="Q6CZU0"/>
<dbReference type="STRING" id="218491.ECA4061"/>
<dbReference type="KEGG" id="eca:ECA4061"/>
<dbReference type="PATRIC" id="fig|218491.5.peg.4127"/>
<dbReference type="eggNOG" id="COG3089">
    <property type="taxonomic scope" value="Bacteria"/>
</dbReference>
<dbReference type="HOGENOM" id="CLU_186759_1_0_6"/>
<dbReference type="OrthoDB" id="6120729at2"/>
<dbReference type="Proteomes" id="UP000007966">
    <property type="component" value="Chromosome"/>
</dbReference>
<dbReference type="Gene3D" id="1.10.10.610">
    <property type="entry name" value="YehU-like"/>
    <property type="match status" value="1"/>
</dbReference>
<dbReference type="HAMAP" id="MF_00690">
    <property type="entry name" value="UPF0270"/>
    <property type="match status" value="1"/>
</dbReference>
<dbReference type="InterPro" id="IPR010648">
    <property type="entry name" value="UPF0270"/>
</dbReference>
<dbReference type="InterPro" id="IPR036685">
    <property type="entry name" value="YehU-like_sf"/>
</dbReference>
<dbReference type="NCBIfam" id="NF003438">
    <property type="entry name" value="PRK04966.1"/>
    <property type="match status" value="1"/>
</dbReference>
<dbReference type="Pfam" id="PF06794">
    <property type="entry name" value="UPF0270"/>
    <property type="match status" value="1"/>
</dbReference>
<dbReference type="PIRSF" id="PIRSF006169">
    <property type="entry name" value="UCP006169"/>
    <property type="match status" value="1"/>
</dbReference>
<dbReference type="SUPFAM" id="SSF118001">
    <property type="entry name" value="YehU-like"/>
    <property type="match status" value="1"/>
</dbReference>
<evidence type="ECO:0000255" key="1">
    <source>
        <dbReference type="HAMAP-Rule" id="MF_00690"/>
    </source>
</evidence>
<reference key="1">
    <citation type="journal article" date="2004" name="Proc. Natl. Acad. Sci. U.S.A.">
        <title>Genome sequence of the enterobacterial phytopathogen Erwinia carotovora subsp. atroseptica and characterization of virulence factors.</title>
        <authorList>
            <person name="Bell K.S."/>
            <person name="Sebaihia M."/>
            <person name="Pritchard L."/>
            <person name="Holden M.T.G."/>
            <person name="Hyman L.J."/>
            <person name="Holeva M.C."/>
            <person name="Thomson N.R."/>
            <person name="Bentley S.D."/>
            <person name="Churcher L.J.C."/>
            <person name="Mungall K."/>
            <person name="Atkin R."/>
            <person name="Bason N."/>
            <person name="Brooks K."/>
            <person name="Chillingworth T."/>
            <person name="Clark K."/>
            <person name="Doggett J."/>
            <person name="Fraser A."/>
            <person name="Hance Z."/>
            <person name="Hauser H."/>
            <person name="Jagels K."/>
            <person name="Moule S."/>
            <person name="Norbertczak H."/>
            <person name="Ormond D."/>
            <person name="Price C."/>
            <person name="Quail M.A."/>
            <person name="Sanders M."/>
            <person name="Walker D."/>
            <person name="Whitehead S."/>
            <person name="Salmond G.P.C."/>
            <person name="Birch P.R.J."/>
            <person name="Parkhill J."/>
            <person name="Toth I.K."/>
        </authorList>
    </citation>
    <scope>NUCLEOTIDE SEQUENCE [LARGE SCALE GENOMIC DNA]</scope>
    <source>
        <strain>SCRI 1043 / ATCC BAA-672</strain>
    </source>
</reference>
<accession>Q6CZU0</accession>
<sequence>MIIPWQQLDPETLDSIIESFVLREGTDYGEQERSLAQKVEDIRSQLQSGEVVLVWSELHETLNIMPRSQLNAGGHAPY</sequence>
<keyword id="KW-1185">Reference proteome</keyword>
<gene>
    <name type="ordered locus">ECA4061</name>
</gene>
<name>Y4061_PECAS</name>
<proteinExistence type="inferred from homology"/>